<keyword id="KW-0444">Lipid biosynthesis</keyword>
<keyword id="KW-0443">Lipid metabolism</keyword>
<keyword id="KW-0489">Methyltransferase</keyword>
<keyword id="KW-1185">Reference proteome</keyword>
<keyword id="KW-0808">Transferase</keyword>
<organism>
    <name type="scientific">Mycobacterium tuberculosis (strain CDC 1551 / Oshkosh)</name>
    <dbReference type="NCBI Taxonomy" id="83331"/>
    <lineage>
        <taxon>Bacteria</taxon>
        <taxon>Bacillati</taxon>
        <taxon>Actinomycetota</taxon>
        <taxon>Actinomycetes</taxon>
        <taxon>Mycobacteriales</taxon>
        <taxon>Mycobacteriaceae</taxon>
        <taxon>Mycobacterium</taxon>
        <taxon>Mycobacterium tuberculosis complex</taxon>
    </lineage>
</organism>
<comment type="function">
    <text evidence="1">Catalyzes the methylation of the lipid moiety of the intermediate compounds phthiotriol and glycosylated phenolphthiotriol dimycoserosates to form phthiocerol dimycocerosates (DIM A) and glycosylated phenolphthiocerol dimycocerosates (PGL).</text>
</comment>
<comment type="similarity">
    <text evidence="2">Belongs to the methyltransferase superfamily. Phthiotriol/phenolphthiotriol dimycocerosates methyltransferase family.</text>
</comment>
<feature type="chain" id="PRO_0000427976" description="Phthiotriol/phenolphthiotriol dimycocerosates methyltransferase">
    <location>
        <begin position="1"/>
        <end position="270"/>
    </location>
</feature>
<proteinExistence type="inferred from homology"/>
<sequence>MAFSRTHSLLARAGSTSTYKRVWRYWYPLMTRGLGNDEIVFINWAYEEDPPMDLPLEASDEPNRAHINLYHRTATQVDLGGKQVLEVSCGHGGGASYLTRTLHPASYTGLDLNQAGIKLCKKRHRLPGLDFVRGDAENLPFDDESFDVVLNVEASHCYPHFRRFLAEVVRVLRPGGYFPYADLRPNNEIAAWEADLAATPLRQLSQRQINAEVLRGIGNNSQKSRDLVDRHLPAFLRFAGREFIGVQGTQLSRYLEGGELSYRMYCFTKD</sequence>
<protein>
    <recommendedName>
        <fullName>Phthiotriol/phenolphthiotriol dimycocerosates methyltransferase</fullName>
        <ecNumber>2.1.1.-</ecNumber>
    </recommendedName>
</protein>
<dbReference type="EC" id="2.1.1.-"/>
<dbReference type="EMBL" id="AE000516">
    <property type="protein sequence ID" value="AAK47352.1"/>
    <property type="molecule type" value="Genomic_DNA"/>
</dbReference>
<dbReference type="PIR" id="E70669">
    <property type="entry name" value="E70669"/>
</dbReference>
<dbReference type="RefSeq" id="WP_003414900.1">
    <property type="nucleotide sequence ID" value="NZ_KK341227.1"/>
</dbReference>
<dbReference type="SMR" id="P9WIN2"/>
<dbReference type="KEGG" id="mtc:MT3026"/>
<dbReference type="PATRIC" id="fig|83331.31.peg.3268"/>
<dbReference type="HOGENOM" id="CLU_068661_0_0_11"/>
<dbReference type="Proteomes" id="UP000001020">
    <property type="component" value="Chromosome"/>
</dbReference>
<dbReference type="GO" id="GO:0008757">
    <property type="term" value="F:S-adenosylmethionine-dependent methyltransferase activity"/>
    <property type="evidence" value="ECO:0007669"/>
    <property type="project" value="InterPro"/>
</dbReference>
<dbReference type="GO" id="GO:0006629">
    <property type="term" value="P:lipid metabolic process"/>
    <property type="evidence" value="ECO:0007669"/>
    <property type="project" value="UniProtKB-KW"/>
</dbReference>
<dbReference type="GO" id="GO:0032259">
    <property type="term" value="P:methylation"/>
    <property type="evidence" value="ECO:0007669"/>
    <property type="project" value="UniProtKB-KW"/>
</dbReference>
<dbReference type="CDD" id="cd02440">
    <property type="entry name" value="AdoMet_MTases"/>
    <property type="match status" value="1"/>
</dbReference>
<dbReference type="FunFam" id="3.40.50.150:FF:000444">
    <property type="entry name" value="Phthiotriol/phenolphthiotriol dimycocerosates methyltransferase"/>
    <property type="match status" value="1"/>
</dbReference>
<dbReference type="Gene3D" id="3.40.50.150">
    <property type="entry name" value="Vaccinia Virus protein VP39"/>
    <property type="match status" value="1"/>
</dbReference>
<dbReference type="InterPro" id="IPR013216">
    <property type="entry name" value="Methyltransf_11"/>
</dbReference>
<dbReference type="InterPro" id="IPR050508">
    <property type="entry name" value="Methyltransf_Superfamily"/>
</dbReference>
<dbReference type="InterPro" id="IPR054877">
    <property type="entry name" value="PthPhpthDimycoMt"/>
</dbReference>
<dbReference type="InterPro" id="IPR029063">
    <property type="entry name" value="SAM-dependent_MTases_sf"/>
</dbReference>
<dbReference type="NCBIfam" id="NF045823">
    <property type="entry name" value="PthPhpthDimycoMt"/>
    <property type="match status" value="1"/>
</dbReference>
<dbReference type="PANTHER" id="PTHR42912">
    <property type="entry name" value="METHYLTRANSFERASE"/>
    <property type="match status" value="1"/>
</dbReference>
<dbReference type="PANTHER" id="PTHR42912:SF93">
    <property type="entry name" value="N6-ADENOSINE-METHYLTRANSFERASE TMT1A"/>
    <property type="match status" value="1"/>
</dbReference>
<dbReference type="Pfam" id="PF08241">
    <property type="entry name" value="Methyltransf_11"/>
    <property type="match status" value="1"/>
</dbReference>
<dbReference type="SUPFAM" id="SSF53335">
    <property type="entry name" value="S-adenosyl-L-methionine-dependent methyltransferases"/>
    <property type="match status" value="1"/>
</dbReference>
<accession>P9WIN2</accession>
<accession>L0TBC8</accession>
<accession>O08026</accession>
<accession>Q50464</accession>
<accession>Q798M4</accession>
<accession>Q7D6D5</accession>
<evidence type="ECO:0000250" key="1"/>
<evidence type="ECO:0000305" key="2"/>
<gene>
    <name type="ordered locus">MT3026</name>
</gene>
<name>PHMT_MYCTO</name>
<reference key="1">
    <citation type="journal article" date="2002" name="J. Bacteriol.">
        <title>Whole-genome comparison of Mycobacterium tuberculosis clinical and laboratory strains.</title>
        <authorList>
            <person name="Fleischmann R.D."/>
            <person name="Alland D."/>
            <person name="Eisen J.A."/>
            <person name="Carpenter L."/>
            <person name="White O."/>
            <person name="Peterson J.D."/>
            <person name="DeBoy R.T."/>
            <person name="Dodson R.J."/>
            <person name="Gwinn M.L."/>
            <person name="Haft D.H."/>
            <person name="Hickey E.K."/>
            <person name="Kolonay J.F."/>
            <person name="Nelson W.C."/>
            <person name="Umayam L.A."/>
            <person name="Ermolaeva M.D."/>
            <person name="Salzberg S.L."/>
            <person name="Delcher A."/>
            <person name="Utterback T.R."/>
            <person name="Weidman J.F."/>
            <person name="Khouri H.M."/>
            <person name="Gill J."/>
            <person name="Mikula A."/>
            <person name="Bishai W."/>
            <person name="Jacobs W.R. Jr."/>
            <person name="Venter J.C."/>
            <person name="Fraser C.M."/>
        </authorList>
    </citation>
    <scope>NUCLEOTIDE SEQUENCE [LARGE SCALE GENOMIC DNA]</scope>
    <source>
        <strain>CDC 1551 / Oshkosh</strain>
    </source>
</reference>